<dbReference type="EMBL" id="Z36277">
    <property type="protein sequence ID" value="CAA85285.1"/>
    <property type="molecule type" value="mRNA"/>
</dbReference>
<dbReference type="EMBL" id="U75409">
    <property type="protein sequence ID" value="AAB19111.1"/>
    <property type="molecule type" value="mRNA"/>
</dbReference>
<dbReference type="EMBL" id="BC100643">
    <property type="protein sequence ID" value="AAI00644.1"/>
    <property type="molecule type" value="mRNA"/>
</dbReference>
<dbReference type="EMBL" id="AF336828">
    <property type="protein sequence ID" value="AAK21297.1"/>
    <property type="molecule type" value="mRNA"/>
</dbReference>
<dbReference type="PIR" id="I55472">
    <property type="entry name" value="I55472"/>
</dbReference>
<dbReference type="RefSeq" id="NP_445915.1">
    <property type="nucleotide sequence ID" value="NM_053463.3"/>
</dbReference>
<dbReference type="RefSeq" id="XP_006229227.1">
    <property type="nucleotide sequence ID" value="XM_006229165.1"/>
</dbReference>
<dbReference type="BMRB" id="Q63083"/>
<dbReference type="SMR" id="Q63083"/>
<dbReference type="BioGRID" id="250025">
    <property type="interactions" value="2"/>
</dbReference>
<dbReference type="FunCoup" id="Q63083">
    <property type="interactions" value="2414"/>
</dbReference>
<dbReference type="IntAct" id="Q63083">
    <property type="interactions" value="3"/>
</dbReference>
<dbReference type="STRING" id="10116.ENSRNOP00000028390"/>
<dbReference type="iPTMnet" id="Q63083"/>
<dbReference type="PhosphoSitePlus" id="Q63083"/>
<dbReference type="jPOST" id="Q63083"/>
<dbReference type="PaxDb" id="10116-ENSRNOP00000028390"/>
<dbReference type="GeneID" id="84595"/>
<dbReference type="KEGG" id="rno:84595"/>
<dbReference type="UCSC" id="RGD:620030">
    <property type="organism name" value="rat"/>
</dbReference>
<dbReference type="AGR" id="RGD:620030"/>
<dbReference type="CTD" id="4924"/>
<dbReference type="RGD" id="620030">
    <property type="gene designation" value="Nucb1"/>
</dbReference>
<dbReference type="VEuPathDB" id="HostDB:ENSRNOG00000020889"/>
<dbReference type="eggNOG" id="KOG3866">
    <property type="taxonomic scope" value="Eukaryota"/>
</dbReference>
<dbReference type="HOGENOM" id="CLU_031153_1_0_1"/>
<dbReference type="InParanoid" id="Q63083"/>
<dbReference type="PhylomeDB" id="Q63083"/>
<dbReference type="TreeFam" id="TF323218"/>
<dbReference type="Reactome" id="R-RNO-381426">
    <property type="pathway name" value="Regulation of Insulin-like Growth Factor (IGF) transport and uptake by Insulin-like Growth Factor Binding Proteins (IGFBPs)"/>
</dbReference>
<dbReference type="Reactome" id="R-RNO-8957275">
    <property type="pathway name" value="Post-translational protein phosphorylation"/>
</dbReference>
<dbReference type="PRO" id="PR:Q63083"/>
<dbReference type="Proteomes" id="UP000002494">
    <property type="component" value="Chromosome 1"/>
</dbReference>
<dbReference type="Bgee" id="ENSRNOG00000020889">
    <property type="expression patterns" value="Expressed in cerebellum and 19 other cell types or tissues"/>
</dbReference>
<dbReference type="GO" id="GO:0005769">
    <property type="term" value="C:early endosome"/>
    <property type="evidence" value="ECO:0000314"/>
    <property type="project" value="RGD"/>
</dbReference>
<dbReference type="GO" id="GO:0005793">
    <property type="term" value="C:endoplasmic reticulum-Golgi intermediate compartment"/>
    <property type="evidence" value="ECO:0000266"/>
    <property type="project" value="RGD"/>
</dbReference>
<dbReference type="GO" id="GO:0005576">
    <property type="term" value="C:extracellular region"/>
    <property type="evidence" value="ECO:0000314"/>
    <property type="project" value="RGD"/>
</dbReference>
<dbReference type="GO" id="GO:0005615">
    <property type="term" value="C:extracellular space"/>
    <property type="evidence" value="ECO:0000314"/>
    <property type="project" value="RGD"/>
</dbReference>
<dbReference type="GO" id="GO:0090498">
    <property type="term" value="C:extrinsic component of Golgi membrane"/>
    <property type="evidence" value="ECO:0000314"/>
    <property type="project" value="RGD"/>
</dbReference>
<dbReference type="GO" id="GO:0032580">
    <property type="term" value="C:Golgi cisterna membrane"/>
    <property type="evidence" value="ECO:0000314"/>
    <property type="project" value="RGD"/>
</dbReference>
<dbReference type="GO" id="GO:0005798">
    <property type="term" value="C:Golgi-associated vesicle"/>
    <property type="evidence" value="ECO:0000314"/>
    <property type="project" value="RGD"/>
</dbReference>
<dbReference type="GO" id="GO:0098547">
    <property type="term" value="C:lumenal side of Golgi membrane"/>
    <property type="evidence" value="ECO:0000314"/>
    <property type="project" value="RGD"/>
</dbReference>
<dbReference type="GO" id="GO:0005802">
    <property type="term" value="C:trans-Golgi network"/>
    <property type="evidence" value="ECO:0000314"/>
    <property type="project" value="RGD"/>
</dbReference>
<dbReference type="GO" id="GO:0005509">
    <property type="term" value="F:calcium ion binding"/>
    <property type="evidence" value="ECO:0000314"/>
    <property type="project" value="RGD"/>
</dbReference>
<dbReference type="GO" id="GO:0003677">
    <property type="term" value="F:DNA binding"/>
    <property type="evidence" value="ECO:0007669"/>
    <property type="project" value="UniProtKB-KW"/>
</dbReference>
<dbReference type="GO" id="GO:0001965">
    <property type="term" value="F:G-protein alpha-subunit binding"/>
    <property type="evidence" value="ECO:0000314"/>
    <property type="project" value="UniProtKB"/>
</dbReference>
<dbReference type="GO" id="GO:0005085">
    <property type="term" value="F:guanyl-nucleotide exchange factor activity"/>
    <property type="evidence" value="ECO:0000314"/>
    <property type="project" value="UniProtKB"/>
</dbReference>
<dbReference type="GO" id="GO:1903533">
    <property type="term" value="P:regulation of protein targeting"/>
    <property type="evidence" value="ECO:0000314"/>
    <property type="project" value="RGD"/>
</dbReference>
<dbReference type="GO" id="GO:0007264">
    <property type="term" value="P:small GTPase-mediated signal transduction"/>
    <property type="evidence" value="ECO:0000314"/>
    <property type="project" value="UniProtKB"/>
</dbReference>
<dbReference type="FunFam" id="1.10.238.10:FF:000045">
    <property type="entry name" value="Nucleobindin 2"/>
    <property type="match status" value="1"/>
</dbReference>
<dbReference type="Gene3D" id="1.10.238.10">
    <property type="entry name" value="EF-hand"/>
    <property type="match status" value="1"/>
</dbReference>
<dbReference type="InterPro" id="IPR011992">
    <property type="entry name" value="EF-hand-dom_pair"/>
</dbReference>
<dbReference type="InterPro" id="IPR018247">
    <property type="entry name" value="EF_Hand_1_Ca_BS"/>
</dbReference>
<dbReference type="InterPro" id="IPR002048">
    <property type="entry name" value="EF_hand_dom"/>
</dbReference>
<dbReference type="InterPro" id="IPR040250">
    <property type="entry name" value="Nucleobindin"/>
</dbReference>
<dbReference type="PANTHER" id="PTHR19237">
    <property type="entry name" value="NUCLEOBINDIN"/>
    <property type="match status" value="1"/>
</dbReference>
<dbReference type="PANTHER" id="PTHR19237:SF21">
    <property type="entry name" value="NUCLEOBINDIN-1"/>
    <property type="match status" value="1"/>
</dbReference>
<dbReference type="Pfam" id="PF25434">
    <property type="entry name" value="NUCB1_N"/>
    <property type="match status" value="1"/>
</dbReference>
<dbReference type="SUPFAM" id="SSF47473">
    <property type="entry name" value="EF-hand"/>
    <property type="match status" value="1"/>
</dbReference>
<dbReference type="PROSITE" id="PS00018">
    <property type="entry name" value="EF_HAND_1"/>
    <property type="match status" value="2"/>
</dbReference>
<dbReference type="PROSITE" id="PS50222">
    <property type="entry name" value="EF_HAND_2"/>
    <property type="match status" value="2"/>
</dbReference>
<reference key="1">
    <citation type="journal article" date="1995" name="J. Biol. Chem.">
        <title>Isolation, characterization, and primary structure of a calcium-binding 63-kDa bone protein.</title>
        <authorList>
            <person name="Wendel M."/>
            <person name="Sommarin Y."/>
            <person name="Bergman T."/>
            <person name="Heinegaard D."/>
        </authorList>
    </citation>
    <scope>NUCLEOTIDE SEQUENCE [MRNA]</scope>
    <scope>FUNCTION</scope>
    <scope>SUBCELLULAR LOCATION</scope>
    <scope>TISSUE SPECIFICITY</scope>
    <source>
        <tissue>Bone</tissue>
    </source>
</reference>
<reference key="2">
    <citation type="submission" date="2001-01" db="EMBL/GenBank/DDBJ databases">
        <title>Rat nucleobindin mRNA, complete cds and including 3' UTR.</title>
        <authorList>
            <person name="Long X."/>
            <person name="Bigsby R.M."/>
            <person name="Nephew K.P."/>
        </authorList>
    </citation>
    <scope>NUCLEOTIDE SEQUENCE [MRNA]</scope>
    <source>
        <strain>Sprague-Dawley</strain>
    </source>
</reference>
<reference key="3">
    <citation type="journal article" date="2004" name="Genome Res.">
        <title>The status, quality, and expansion of the NIH full-length cDNA project: the Mammalian Gene Collection (MGC).</title>
        <authorList>
            <consortium name="The MGC Project Team"/>
        </authorList>
    </citation>
    <scope>NUCLEOTIDE SEQUENCE [LARGE SCALE MRNA]</scope>
    <source>
        <tissue>Prostate</tissue>
    </source>
</reference>
<reference key="4">
    <citation type="submission" date="1996-10" db="EMBL/GenBank/DDBJ databases">
        <authorList>
            <person name="Adams L.A."/>
            <person name="Werny I."/>
            <person name="Schwartz S.M."/>
        </authorList>
    </citation>
    <scope>NUCLEOTIDE SEQUENCE [MRNA] OF 351-425</scope>
    <source>
        <strain>Wistar Kyoto</strain>
        <tissue>Aortic smooth muscle</tissue>
    </source>
</reference>
<reference key="5">
    <citation type="journal article" date="1998" name="J. Cell Biol.">
        <title>The mammalian calcium-binding protein, nucleobindin (CALNUC), is a Golgi resident protein.</title>
        <authorList>
            <person name="Lin P."/>
            <person name="Le-Niculescu H."/>
            <person name="Hofmeister R."/>
            <person name="McCaffery J.M."/>
            <person name="Jin M."/>
            <person name="Hennemann H."/>
            <person name="McQuistan T."/>
            <person name="De Vries L."/>
            <person name="Farquhar M.G."/>
        </authorList>
    </citation>
    <scope>SUBCELLULAR LOCATION</scope>
</reference>
<reference key="6">
    <citation type="journal article" date="2000" name="Proc. Natl. Acad. Sci. U.S.A.">
        <title>Calnuc, an EF-hand Ca(2+) binding protein, specifically interacts with the C-terminal alpha5-helix of G(alpha)i3.</title>
        <authorList>
            <person name="Lin P."/>
            <person name="Fischer T."/>
            <person name="Weiss T."/>
            <person name="Farquhar M.G."/>
        </authorList>
    </citation>
    <scope>SUBCELLULAR LOCATION</scope>
    <scope>INTERACTION WITH GNAI3</scope>
</reference>
<reference key="7">
    <citation type="journal article" date="2006" name="Proc. Natl. Acad. Sci. U.S.A.">
        <title>Quantitative phosphoproteomics of vasopressin-sensitive renal cells: regulation of aquaporin-2 phosphorylation at two sites.</title>
        <authorList>
            <person name="Hoffert J.D."/>
            <person name="Pisitkun T."/>
            <person name="Wang G."/>
            <person name="Shen R.-F."/>
            <person name="Knepper M.A."/>
        </authorList>
    </citation>
    <scope>PHOSPHORYLATION [LARGE SCALE ANALYSIS] AT SER-368</scope>
    <scope>IDENTIFICATION BY MASS SPECTROMETRY [LARGE SCALE ANALYSIS]</scope>
</reference>
<reference key="8">
    <citation type="journal article" date="2011" name="J. Biol. Chem.">
        <title>G Protein binding sites on Calnuc (nucleobindin 1) and NUCB2 (nucleobindin 2) define a new class of G(alpha)i-regulatory motifs.</title>
        <authorList>
            <person name="Garcia-Marcos M."/>
            <person name="Kietrsunthorn P.S."/>
            <person name="Wang H."/>
            <person name="Ghosh P."/>
            <person name="Farquhar M.G."/>
        </authorList>
    </citation>
    <scope>FUNCTION</scope>
    <scope>INTERACTION WITH GNAI1; GNAI2 AND GNAI3</scope>
    <scope>GBA MOTIF</scope>
    <scope>MUTAGENESIS OF LEU-313; PHE-316 AND LEU-317</scope>
</reference>
<reference key="9">
    <citation type="journal article" date="2012" name="Nat. Commun.">
        <title>Quantitative maps of protein phosphorylation sites across 14 different rat organs and tissues.</title>
        <authorList>
            <person name="Lundby A."/>
            <person name="Secher A."/>
            <person name="Lage K."/>
            <person name="Nordsborg N.B."/>
            <person name="Dmytriyev A."/>
            <person name="Lundby C."/>
            <person name="Olsen J.V."/>
        </authorList>
    </citation>
    <scope>PHOSPHORYLATION [LARGE SCALE ANALYSIS] AT SER-85 AND SER-368</scope>
    <scope>IDENTIFICATION BY MASS SPECTROMETRY [LARGE SCALE ANALYSIS]</scope>
</reference>
<keyword id="KW-0106">Calcium</keyword>
<keyword id="KW-0175">Coiled coil</keyword>
<keyword id="KW-0963">Cytoplasm</keyword>
<keyword id="KW-0238">DNA-binding</keyword>
<keyword id="KW-0333">Golgi apparatus</keyword>
<keyword id="KW-0344">Guanine-nucleotide releasing factor</keyword>
<keyword id="KW-0472">Membrane</keyword>
<keyword id="KW-0479">Metal-binding</keyword>
<keyword id="KW-0597">Phosphoprotein</keyword>
<keyword id="KW-1185">Reference proteome</keyword>
<keyword id="KW-0677">Repeat</keyword>
<keyword id="KW-0964">Secreted</keyword>
<keyword id="KW-0732">Signal</keyword>
<evidence type="ECO:0000250" key="1">
    <source>
        <dbReference type="UniProtKB" id="Q02818"/>
    </source>
</evidence>
<evidence type="ECO:0000250" key="2">
    <source>
        <dbReference type="UniProtKB" id="Q02819"/>
    </source>
</evidence>
<evidence type="ECO:0000250" key="3">
    <source>
        <dbReference type="UniProtKB" id="Q0P569"/>
    </source>
</evidence>
<evidence type="ECO:0000255" key="4"/>
<evidence type="ECO:0000255" key="5">
    <source>
        <dbReference type="PROSITE-ProRule" id="PRU00448"/>
    </source>
</evidence>
<evidence type="ECO:0000256" key="6">
    <source>
        <dbReference type="SAM" id="MobiDB-lite"/>
    </source>
</evidence>
<evidence type="ECO:0000269" key="7">
    <source>
    </source>
</evidence>
<evidence type="ECO:0000269" key="8">
    <source>
    </source>
</evidence>
<evidence type="ECO:0000269" key="9">
    <source>
    </source>
</evidence>
<evidence type="ECO:0000269" key="10">
    <source>
    </source>
</evidence>
<evidence type="ECO:0000305" key="11"/>
<evidence type="ECO:0007744" key="12">
    <source>
    </source>
</evidence>
<evidence type="ECO:0007744" key="13">
    <source>
    </source>
</evidence>
<accession>Q63083</accession>
<accession>P97623</accession>
<accession>Q497A4</accession>
<organism>
    <name type="scientific">Rattus norvegicus</name>
    <name type="common">Rat</name>
    <dbReference type="NCBI Taxonomy" id="10116"/>
    <lineage>
        <taxon>Eukaryota</taxon>
        <taxon>Metazoa</taxon>
        <taxon>Chordata</taxon>
        <taxon>Craniata</taxon>
        <taxon>Vertebrata</taxon>
        <taxon>Euteleostomi</taxon>
        <taxon>Mammalia</taxon>
        <taxon>Eutheria</taxon>
        <taxon>Euarchontoglires</taxon>
        <taxon>Glires</taxon>
        <taxon>Rodentia</taxon>
        <taxon>Myomorpha</taxon>
        <taxon>Muroidea</taxon>
        <taxon>Muridae</taxon>
        <taxon>Murinae</taxon>
        <taxon>Rattus</taxon>
    </lineage>
</organism>
<sequence length="459" mass="53507">MPTSVPRGAPFLLLPPLLMLSAVLAVPVDRAAPHQEDNQATETPDTGLYYHRYLQEVINVLETDGHFREKLQAANAEDIKSGKLSQELDFVSHNVRTKLDELKRQEVSRLRMLLKAKMDAKQEPNLQVDHMNLLKQFEHLDPQNQHTFEARDLELLIQTATRDLAQYDAAHHEEFKRYEMLKEHERRRYLESLGEEQRKEAERKLQEQQRRHREHPKVNVPGSQAQLKEVWEELDGLDPNRFNPKTFFILHDINSDGVLDEQELEALFTKELEKVYDPKNEEDDMREMEEERLRMREHVMKNVDTNQDRLVTLEEFLASTQRKEFGETAEGWKTVEMYPAYTEEELKRFEEELAAREAELNARAQRLSQETEALGRSQDRLEAQKRELQQAVLQMEQRKQQQQEQSAPPSQPDGQLQFRADTGDAPVPAPAGDQKDVPASEKKVPEQPPVLPQLDSQHL</sequence>
<name>NUCB1_RAT</name>
<feature type="signal peptide" evidence="3">
    <location>
        <begin position="1"/>
        <end position="25"/>
    </location>
</feature>
<feature type="chain" id="PRO_0000004164" description="Nucleobindin-1">
    <location>
        <begin position="26"/>
        <end position="459"/>
    </location>
</feature>
<feature type="domain" description="EF-hand 1" evidence="5">
    <location>
        <begin position="239"/>
        <end position="274"/>
    </location>
</feature>
<feature type="domain" description="EF-hand 2" evidence="5">
    <location>
        <begin position="291"/>
        <end position="326"/>
    </location>
</feature>
<feature type="DNA-binding region" evidence="4">
    <location>
        <begin position="171"/>
        <end position="217"/>
    </location>
</feature>
<feature type="region of interest" description="Disordered" evidence="6">
    <location>
        <begin position="192"/>
        <end position="220"/>
    </location>
</feature>
<feature type="region of interest" description="Binds to GNAI2 and GNAI3">
    <location>
        <begin position="227"/>
        <end position="320"/>
    </location>
</feature>
<feature type="region of interest" description="Disordered" evidence="6">
    <location>
        <begin position="393"/>
        <end position="459"/>
    </location>
</feature>
<feature type="coiled-coil region" evidence="4">
    <location>
        <begin position="149"/>
        <end position="217"/>
    </location>
</feature>
<feature type="coiled-coil region" evidence="4">
    <location>
        <begin position="340"/>
        <end position="407"/>
    </location>
</feature>
<feature type="short sequence motif" description="GBA" evidence="1">
    <location>
        <begin position="302"/>
        <end position="332"/>
    </location>
</feature>
<feature type="compositionally biased region" description="Basic and acidic residues" evidence="6">
    <location>
        <begin position="192"/>
        <end position="209"/>
    </location>
</feature>
<feature type="compositionally biased region" description="Basic and acidic residues" evidence="6">
    <location>
        <begin position="433"/>
        <end position="445"/>
    </location>
</feature>
<feature type="binding site" evidence="5">
    <location>
        <position position="252"/>
    </location>
    <ligand>
        <name>Ca(2+)</name>
        <dbReference type="ChEBI" id="CHEBI:29108"/>
        <label>1</label>
    </ligand>
</feature>
<feature type="binding site" evidence="5">
    <location>
        <position position="254"/>
    </location>
    <ligand>
        <name>Ca(2+)</name>
        <dbReference type="ChEBI" id="CHEBI:29108"/>
        <label>1</label>
    </ligand>
</feature>
<feature type="binding site" evidence="5">
    <location>
        <position position="256"/>
    </location>
    <ligand>
        <name>Ca(2+)</name>
        <dbReference type="ChEBI" id="CHEBI:29108"/>
        <label>1</label>
    </ligand>
</feature>
<feature type="binding site" evidence="5">
    <location>
        <position position="263"/>
    </location>
    <ligand>
        <name>Ca(2+)</name>
        <dbReference type="ChEBI" id="CHEBI:29108"/>
        <label>1</label>
    </ligand>
</feature>
<feature type="binding site" evidence="5">
    <location>
        <position position="304"/>
    </location>
    <ligand>
        <name>Ca(2+)</name>
        <dbReference type="ChEBI" id="CHEBI:29108"/>
        <label>2</label>
    </ligand>
</feature>
<feature type="binding site" evidence="5">
    <location>
        <position position="306"/>
    </location>
    <ligand>
        <name>Ca(2+)</name>
        <dbReference type="ChEBI" id="CHEBI:29108"/>
        <label>2</label>
    </ligand>
</feature>
<feature type="binding site" evidence="5">
    <location>
        <position position="308"/>
    </location>
    <ligand>
        <name>Ca(2+)</name>
        <dbReference type="ChEBI" id="CHEBI:29108"/>
        <label>2</label>
    </ligand>
</feature>
<feature type="binding site" evidence="5">
    <location>
        <position position="315"/>
    </location>
    <ligand>
        <name>Ca(2+)</name>
        <dbReference type="ChEBI" id="CHEBI:29108"/>
        <label>2</label>
    </ligand>
</feature>
<feature type="modified residue" description="Phosphoserine" evidence="13">
    <location>
        <position position="85"/>
    </location>
</feature>
<feature type="modified residue" description="Phosphothreonine" evidence="1">
    <location>
        <position position="147"/>
    </location>
</feature>
<feature type="modified residue" description="Phosphoserine" evidence="12 13">
    <location>
        <position position="368"/>
    </location>
</feature>
<feature type="modified residue" description="Phosphoserine" evidence="2">
    <location>
        <position position="456"/>
    </location>
</feature>
<feature type="mutagenesis site" description="Decreased binding to GNAI3. Further decrease in binding to GNAI3 and loss of GNAI3 activation; when associated with A-317." evidence="8">
    <original>L</original>
    <variation>A</variation>
    <location>
        <position position="313"/>
    </location>
</feature>
<feature type="mutagenesis site" description="Decreased binding to GNAI3 and impaired GNAI3 activation." evidence="8">
    <original>F</original>
    <variation>A</variation>
    <location>
        <position position="316"/>
    </location>
</feature>
<feature type="mutagenesis site" description="Decreased binding to GNAI3. Further decrease in binding to GNAI3 and loss of GNAI3 activation; when associated with A-313." evidence="8">
    <original>L</original>
    <variation>A</variation>
    <location>
        <position position="317"/>
    </location>
</feature>
<comment type="function">
    <text evidence="8 9">Major calcium-binding protein of the Golgi which may have a role in calcium homeostasis (PubMed:7890746). Acts as a non-receptor guanine nucleotide exchange factor which binds to and activates alpha subunits of guanine nucleotide-binding proteins (G proteins) (PubMed:21653697).</text>
</comment>
<comment type="subunit">
    <text evidence="7 8">Interacts (via GBA motif) with guanine nucleotide-binding protein G(i) alpha subunits GNAI1, GNAI2 and GNAI3 with higher affinity for GNAI1 and GNAI3 than for GNAI2 (PubMed:10639138, PubMed:21653697). Preferentially interacts with inactive rather than active GNAI3 (PubMed:21653697). Interaction with GNAI3 is inhibited when NUCB1 binds calcium, probably due to a conformational change which renders the GBA motif inaccessible (PubMed:21653697).</text>
</comment>
<comment type="subcellular location">
    <subcellularLocation>
        <location evidence="7 10">Golgi apparatus</location>
        <location evidence="7 10">cis-Golgi network membrane</location>
        <topology evidence="10">Peripheral membrane protein</topology>
        <orientation evidence="10">Lumenal side</orientation>
    </subcellularLocation>
    <subcellularLocation>
        <location evidence="7 10">Cytoplasm</location>
    </subcellularLocation>
    <subcellularLocation>
        <location evidence="9">Secreted</location>
    </subcellularLocation>
    <text evidence="9 10">A small fraction of the protein may be cytoplasmic. In bone at least part of it is found in the extracellular matrix and in the culture medium of calvaria explants.</text>
</comment>
<comment type="tissue specificity">
    <text evidence="9">Minor constituent of the mineralized matrix of bone. Detected in calvaria, rib cartilage, liver, kidney, spleen, brain, lung, skeletal and heart muscle with highest expression in calvaria and approximately half the amount in kidney, liver and brain.</text>
</comment>
<comment type="domain">
    <text evidence="1">The EF-hand domains are unfolded in the absence of Ca(2+) and fold upon Ca(2+) addition.</text>
</comment>
<comment type="domain">
    <text evidence="8">The GBA (G-alpha binding and activating) motif mediates binding to the alpha subunits of guanine nucleotide-binding proteins (G proteins).</text>
</comment>
<comment type="miscellaneous">
    <text>Discovered as DNA-binding protein in the serum of lupus-prone mice.</text>
</comment>
<comment type="similarity">
    <text evidence="11">Belongs to the nucleobindin family.</text>
</comment>
<gene>
    <name type="primary">Nucb1</name>
    <name type="synonym">Nuc</name>
</gene>
<protein>
    <recommendedName>
        <fullName>Nucleobindin-1</fullName>
    </recommendedName>
    <alternativeName>
        <fullName>Bone 63 kDa calcium-binding protein</fullName>
    </alternativeName>
    <alternativeName>
        <fullName>CALNUC</fullName>
    </alternativeName>
</protein>
<proteinExistence type="evidence at protein level"/>